<name>CAS6L_PYRFU</name>
<evidence type="ECO:0000305" key="1"/>
<evidence type="ECO:0000305" key="2">
    <source>
    </source>
</evidence>
<evidence type="ECO:0007829" key="3">
    <source>
        <dbReference type="PDB" id="3UFC"/>
    </source>
</evidence>
<organism>
    <name type="scientific">Pyrococcus furiosus (strain ATCC 43587 / DSM 3638 / JCM 8422 / Vc1)</name>
    <dbReference type="NCBI Taxonomy" id="186497"/>
    <lineage>
        <taxon>Archaea</taxon>
        <taxon>Methanobacteriati</taxon>
        <taxon>Methanobacteriota</taxon>
        <taxon>Thermococci</taxon>
        <taxon>Thermococcales</taxon>
        <taxon>Thermococcaceae</taxon>
        <taxon>Pyrococcus</taxon>
    </lineage>
</organism>
<keyword id="KW-0002">3D-structure</keyword>
<keyword id="KW-0051">Antiviral defense</keyword>
<keyword id="KW-1185">Reference proteome</keyword>
<keyword id="KW-0694">RNA-binding</keyword>
<gene>
    <name type="primary">cas6b</name>
    <name type="synonym">cas6-2</name>
    <name type="synonym">cas6-3</name>
    <name type="ordered locus">PF0393</name>
</gene>
<proteinExistence type="evidence at protein level"/>
<protein>
    <recommendedName>
        <fullName>Putative CRISPR-associated endoribonuclease-like protein Cas6</fullName>
    </recommendedName>
</protein>
<comment type="function">
    <text evidence="1">CRISPR (clustered regularly interspaced short palindromic repeat), is an adaptive immune system that provides protection against mobile genetic elements (viruses, transposable elements and conjugative plasmids). CRISPR clusters contain sequences complementary to antecedent mobile elements and target invading nucleic acids. CRISPR clusters are transcribed and processed into CRISPR RNA (crRNA), also called psiRNA (prokaryotic silencing) in this organism (Potential).</text>
</comment>
<comment type="subunit">
    <text>Binds crRNA.</text>
</comment>
<comment type="similarity">
    <text evidence="1">Belongs to the CRISPR-associated protein Cas6/Cse3/CasE family.</text>
</comment>
<comment type="caution">
    <text evidence="2">No in vitro nuclease activity has been observed against crRNA for this protein.</text>
</comment>
<feature type="chain" id="PRO_0000417971" description="Putative CRISPR-associated endoribonuclease-like protein Cas6">
    <location>
        <begin position="1"/>
        <end position="241"/>
    </location>
</feature>
<feature type="strand" evidence="3">
    <location>
        <begin position="1"/>
        <end position="13"/>
    </location>
</feature>
<feature type="helix" evidence="3">
    <location>
        <begin position="21"/>
        <end position="35"/>
    </location>
</feature>
<feature type="helix" evidence="3">
    <location>
        <begin position="37"/>
        <end position="39"/>
    </location>
</feature>
<feature type="helix" evidence="3">
    <location>
        <begin position="40"/>
        <end position="44"/>
    </location>
</feature>
<feature type="strand" evidence="3">
    <location>
        <begin position="56"/>
        <end position="63"/>
    </location>
</feature>
<feature type="turn" evidence="3">
    <location>
        <begin position="64"/>
        <end position="66"/>
    </location>
</feature>
<feature type="strand" evidence="3">
    <location>
        <begin position="67"/>
        <end position="70"/>
    </location>
</feature>
<feature type="strand" evidence="3">
    <location>
        <begin position="75"/>
        <end position="82"/>
    </location>
</feature>
<feature type="helix" evidence="3">
    <location>
        <begin position="84"/>
        <end position="96"/>
    </location>
</feature>
<feature type="strand" evidence="3">
    <location>
        <begin position="99"/>
        <end position="102"/>
    </location>
</feature>
<feature type="strand" evidence="3">
    <location>
        <begin position="105"/>
        <end position="114"/>
    </location>
</feature>
<feature type="strand" evidence="3">
    <location>
        <begin position="122"/>
        <end position="130"/>
    </location>
</feature>
<feature type="strand" evidence="3">
    <location>
        <begin position="132"/>
        <end position="140"/>
    </location>
</feature>
<feature type="strand" evidence="3">
    <location>
        <begin position="143"/>
        <end position="149"/>
    </location>
</feature>
<feature type="helix" evidence="3">
    <location>
        <begin position="156"/>
        <end position="172"/>
    </location>
</feature>
<feature type="strand" evidence="3">
    <location>
        <begin position="181"/>
        <end position="195"/>
    </location>
</feature>
<feature type="strand" evidence="3">
    <location>
        <begin position="198"/>
        <end position="211"/>
    </location>
</feature>
<feature type="helix" evidence="3">
    <location>
        <begin position="213"/>
        <end position="222"/>
    </location>
</feature>
<feature type="strand" evidence="3">
    <location>
        <begin position="224"/>
        <end position="226"/>
    </location>
</feature>
<feature type="helix" evidence="3">
    <location>
        <begin position="228"/>
        <end position="230"/>
    </location>
</feature>
<feature type="strand" evidence="3">
    <location>
        <begin position="235"/>
        <end position="237"/>
    </location>
</feature>
<dbReference type="EMBL" id="AE009950">
    <property type="protein sequence ID" value="AAL80517.1"/>
    <property type="molecule type" value="Genomic_DNA"/>
</dbReference>
<dbReference type="PDB" id="3UFC">
    <property type="method" value="X-ray"/>
    <property type="resolution" value="2.03 A"/>
    <property type="chains" value="X=1-241"/>
</dbReference>
<dbReference type="PDBsum" id="3UFC"/>
<dbReference type="SMR" id="Q8U3R3"/>
<dbReference type="STRING" id="186497.PF0393"/>
<dbReference type="PaxDb" id="186497-PF0393"/>
<dbReference type="KEGG" id="pfu:PF0393"/>
<dbReference type="PATRIC" id="fig|186497.12.peg.408"/>
<dbReference type="eggNOG" id="arCOG04342">
    <property type="taxonomic scope" value="Archaea"/>
</dbReference>
<dbReference type="HOGENOM" id="CLU_089858_1_1_2"/>
<dbReference type="OrthoDB" id="43942at2157"/>
<dbReference type="PhylomeDB" id="Q8U3R3"/>
<dbReference type="EvolutionaryTrace" id="Q8U3R3"/>
<dbReference type="Proteomes" id="UP000001013">
    <property type="component" value="Chromosome"/>
</dbReference>
<dbReference type="GO" id="GO:0016788">
    <property type="term" value="F:hydrolase activity, acting on ester bonds"/>
    <property type="evidence" value="ECO:0007669"/>
    <property type="project" value="InterPro"/>
</dbReference>
<dbReference type="GO" id="GO:0003723">
    <property type="term" value="F:RNA binding"/>
    <property type="evidence" value="ECO:0007669"/>
    <property type="project" value="UniProtKB-KW"/>
</dbReference>
<dbReference type="GO" id="GO:0051607">
    <property type="term" value="P:defense response to virus"/>
    <property type="evidence" value="ECO:0007669"/>
    <property type="project" value="UniProtKB-KW"/>
</dbReference>
<dbReference type="Gene3D" id="3.30.70.1890">
    <property type="match status" value="1"/>
</dbReference>
<dbReference type="Gene3D" id="3.30.70.1900">
    <property type="match status" value="1"/>
</dbReference>
<dbReference type="InterPro" id="IPR049435">
    <property type="entry name" value="Cas_Cas6_C"/>
</dbReference>
<dbReference type="InterPro" id="IPR010156">
    <property type="entry name" value="CRISPR-assoc_prot_Cas6"/>
</dbReference>
<dbReference type="InterPro" id="IPR045747">
    <property type="entry name" value="CRISPR-assoc_prot_Cas6_N_sf"/>
</dbReference>
<dbReference type="NCBIfam" id="TIGR01877">
    <property type="entry name" value="cas_cas6"/>
    <property type="match status" value="1"/>
</dbReference>
<dbReference type="PANTHER" id="PTHR36984">
    <property type="entry name" value="CRISPR-ASSOCIATED ENDORIBONUCLEASE CAS6 1"/>
    <property type="match status" value="1"/>
</dbReference>
<dbReference type="PANTHER" id="PTHR36984:SF1">
    <property type="entry name" value="CRISPR-ASSOCIATED ENDORIBONUCLEASE CAS6 1"/>
    <property type="match status" value="1"/>
</dbReference>
<dbReference type="Pfam" id="PF21350">
    <property type="entry name" value="Cas6_I-A"/>
    <property type="match status" value="1"/>
</dbReference>
<dbReference type="Pfam" id="PF01881">
    <property type="entry name" value="Cas_Cas6_C"/>
    <property type="match status" value="1"/>
</dbReference>
<dbReference type="PIRSF" id="PIRSF005054">
    <property type="entry name" value="PF1131"/>
    <property type="match status" value="1"/>
</dbReference>
<accession>Q8U3R3</accession>
<reference key="1">
    <citation type="journal article" date="1999" name="Genetics">
        <title>Divergence of the hyperthermophilic archaea Pyrococcus furiosus and P. horikoshii inferred from complete genomic sequences.</title>
        <authorList>
            <person name="Maeder D.L."/>
            <person name="Weiss R.B."/>
            <person name="Dunn D.M."/>
            <person name="Cherry J.L."/>
            <person name="Gonzalez J.M."/>
            <person name="DiRuggiero J."/>
            <person name="Robb F.T."/>
        </authorList>
    </citation>
    <scope>NUCLEOTIDE SEQUENCE [LARGE SCALE GENOMIC DNA]</scope>
    <source>
        <strain>ATCC 43587 / DSM 3638 / JCM 8422 / Vc1</strain>
    </source>
</reference>
<reference key="2">
    <citation type="journal article" date="2012" name="Proteins">
        <title>Crystal structure of a Cas6 paralogous protein from Pyrococcus furiosus.</title>
        <authorList>
            <person name="Park H.M."/>
            <person name="Shin M."/>
            <person name="Sun J."/>
            <person name="Kim G.S."/>
            <person name="Lee Y.C."/>
            <person name="Park J.H."/>
            <person name="Kim B.Y."/>
            <person name="Kim J.S."/>
        </authorList>
    </citation>
    <scope>X-RAY CRYSTALLOGRAPHY (2.03 ANGSTROMS)</scope>
    <scope>RNA-BINDING</scope>
    <scope>LACK OF ENDONUCLEASE ACTIVITY</scope>
    <source>
        <strain>ATCC 43587 / DSM 3638 / JCM 8422 / Vc1</strain>
    </source>
</reference>
<sequence>MRIEIKLLPLQDNPVIPFNYNYELYSQIVEKAGAIEPRIVKLLESPHGYWTFSRIIIRKREIIPEKGIKILSDDISLYISSSNKEIIKGIVEGIEKSPEFKIGDVGFLVADIKALKSKEIKNVNIFSTLSPIVVRTVKFEGDKLKHWDLYPHDELFLDRLRKVMLLRYHEVMGDLPEDKDFRIELIKFKPTRLIVKDSYIRGSLMVFRYYGSKEIAKFGYENGFGEKTNLGFGMVKIIEEQ</sequence>